<gene>
    <name type="primary">ycgB</name>
    <name type="ordered locus">b1188</name>
    <name type="ordered locus">JW1177</name>
</gene>
<organism>
    <name type="scientific">Escherichia coli (strain K12)</name>
    <dbReference type="NCBI Taxonomy" id="83333"/>
    <lineage>
        <taxon>Bacteria</taxon>
        <taxon>Pseudomonadati</taxon>
        <taxon>Pseudomonadota</taxon>
        <taxon>Gammaproteobacteria</taxon>
        <taxon>Enterobacterales</taxon>
        <taxon>Enterobacteriaceae</taxon>
        <taxon>Escherichia</taxon>
    </lineage>
</organism>
<dbReference type="EMBL" id="U00096">
    <property type="protein sequence ID" value="AAC74272.1"/>
    <property type="molecule type" value="Genomic_DNA"/>
</dbReference>
<dbReference type="EMBL" id="AP009048">
    <property type="protein sequence ID" value="BAA36043.1"/>
    <property type="molecule type" value="Genomic_DNA"/>
</dbReference>
<dbReference type="EMBL" id="L02948">
    <property type="protein sequence ID" value="AAC36879.1"/>
    <property type="molecule type" value="Unassigned_DNA"/>
</dbReference>
<dbReference type="PIR" id="A64865">
    <property type="entry name" value="A64865"/>
</dbReference>
<dbReference type="RefSeq" id="NP_415706.1">
    <property type="nucleotide sequence ID" value="NC_000913.3"/>
</dbReference>
<dbReference type="RefSeq" id="WP_000190854.1">
    <property type="nucleotide sequence ID" value="NZ_SSZK01000010.1"/>
</dbReference>
<dbReference type="BioGRID" id="4260103">
    <property type="interactions" value="22"/>
</dbReference>
<dbReference type="DIP" id="DIP-11550N"/>
<dbReference type="FunCoup" id="P29013">
    <property type="interactions" value="25"/>
</dbReference>
<dbReference type="IntAct" id="P29013">
    <property type="interactions" value="4"/>
</dbReference>
<dbReference type="STRING" id="511145.b1188"/>
<dbReference type="jPOST" id="P29013"/>
<dbReference type="PaxDb" id="511145-b1188"/>
<dbReference type="EnsemblBacteria" id="AAC74272">
    <property type="protein sequence ID" value="AAC74272"/>
    <property type="gene ID" value="b1188"/>
</dbReference>
<dbReference type="GeneID" id="946365"/>
<dbReference type="KEGG" id="ecj:JW1177"/>
<dbReference type="KEGG" id="eco:b1188"/>
<dbReference type="KEGG" id="ecoc:C3026_06995"/>
<dbReference type="PATRIC" id="fig|511145.12.peg.1233"/>
<dbReference type="EchoBASE" id="EB1478"/>
<dbReference type="eggNOG" id="COG2719">
    <property type="taxonomic scope" value="Bacteria"/>
</dbReference>
<dbReference type="HOGENOM" id="CLU_010179_3_0_6"/>
<dbReference type="InParanoid" id="P29013"/>
<dbReference type="OMA" id="DPCYAYL"/>
<dbReference type="OrthoDB" id="9784270at2"/>
<dbReference type="PhylomeDB" id="P29013"/>
<dbReference type="BioCyc" id="EcoCyc:EG11516-MONOMER"/>
<dbReference type="PRO" id="PR:P29013"/>
<dbReference type="Proteomes" id="UP000000625">
    <property type="component" value="Chromosome"/>
</dbReference>
<dbReference type="GO" id="GO:0006974">
    <property type="term" value="P:DNA damage response"/>
    <property type="evidence" value="ECO:0000270"/>
    <property type="project" value="EcoliWiki"/>
</dbReference>
<dbReference type="InterPro" id="IPR007390">
    <property type="entry name" value="Spore_V_R"/>
</dbReference>
<dbReference type="InterPro" id="IPR057008">
    <property type="entry name" value="SpoVR-like_C"/>
</dbReference>
<dbReference type="InterPro" id="IPR056174">
    <property type="entry name" value="SpoVR_N"/>
</dbReference>
<dbReference type="NCBIfam" id="NF008737">
    <property type="entry name" value="PRK11767.1"/>
    <property type="match status" value="1"/>
</dbReference>
<dbReference type="PANTHER" id="PTHR30029">
    <property type="entry name" value="STAGE V SPORULATION PROTEIN R"/>
    <property type="match status" value="1"/>
</dbReference>
<dbReference type="PANTHER" id="PTHR30029:SF2">
    <property type="entry name" value="STAGE V SPORULATION PROTEIN R"/>
    <property type="match status" value="1"/>
</dbReference>
<dbReference type="Pfam" id="PF04293">
    <property type="entry name" value="SpoVR"/>
    <property type="match status" value="1"/>
</dbReference>
<dbReference type="Pfam" id="PF24755">
    <property type="entry name" value="SpoVR_C"/>
    <property type="match status" value="1"/>
</dbReference>
<reference key="1">
    <citation type="journal article" date="1996" name="DNA Res.">
        <title>A 718-kb DNA sequence of the Escherichia coli K-12 genome corresponding to the 12.7-28.0 min region on the linkage map.</title>
        <authorList>
            <person name="Oshima T."/>
            <person name="Aiba H."/>
            <person name="Baba T."/>
            <person name="Fujita K."/>
            <person name="Hayashi K."/>
            <person name="Honjo A."/>
            <person name="Ikemoto K."/>
            <person name="Inada T."/>
            <person name="Itoh T."/>
            <person name="Kajihara M."/>
            <person name="Kanai K."/>
            <person name="Kashimoto K."/>
            <person name="Kimura S."/>
            <person name="Kitagawa M."/>
            <person name="Makino K."/>
            <person name="Masuda S."/>
            <person name="Miki T."/>
            <person name="Mizobuchi K."/>
            <person name="Mori H."/>
            <person name="Motomura K."/>
            <person name="Nakamura Y."/>
            <person name="Nashimoto H."/>
            <person name="Nishio Y."/>
            <person name="Saito N."/>
            <person name="Sampei G."/>
            <person name="Seki Y."/>
            <person name="Tagami H."/>
            <person name="Takemoto K."/>
            <person name="Wada C."/>
            <person name="Yamamoto Y."/>
            <person name="Yano M."/>
            <person name="Horiuchi T."/>
        </authorList>
    </citation>
    <scope>NUCLEOTIDE SEQUENCE [LARGE SCALE GENOMIC DNA]</scope>
    <source>
        <strain>K12 / W3110 / ATCC 27325 / DSM 5911</strain>
    </source>
</reference>
<reference key="2">
    <citation type="journal article" date="1997" name="Science">
        <title>The complete genome sequence of Escherichia coli K-12.</title>
        <authorList>
            <person name="Blattner F.R."/>
            <person name="Plunkett G. III"/>
            <person name="Bloch C.A."/>
            <person name="Perna N.T."/>
            <person name="Burland V."/>
            <person name="Riley M."/>
            <person name="Collado-Vides J."/>
            <person name="Glasner J.D."/>
            <person name="Rode C.K."/>
            <person name="Mayhew G.F."/>
            <person name="Gregor J."/>
            <person name="Davis N.W."/>
            <person name="Kirkpatrick H.A."/>
            <person name="Goeden M.A."/>
            <person name="Rose D.J."/>
            <person name="Mau B."/>
            <person name="Shao Y."/>
        </authorList>
    </citation>
    <scope>NUCLEOTIDE SEQUENCE [LARGE SCALE GENOMIC DNA]</scope>
    <source>
        <strain>K12 / MG1655 / ATCC 47076</strain>
    </source>
</reference>
<reference key="3">
    <citation type="journal article" date="2006" name="Mol. Syst. Biol.">
        <title>Highly accurate genome sequences of Escherichia coli K-12 strains MG1655 and W3110.</title>
        <authorList>
            <person name="Hayashi K."/>
            <person name="Morooka N."/>
            <person name="Yamamoto Y."/>
            <person name="Fujita K."/>
            <person name="Isono K."/>
            <person name="Choi S."/>
            <person name="Ohtsubo E."/>
            <person name="Baba T."/>
            <person name="Wanner B.L."/>
            <person name="Mori H."/>
            <person name="Horiuchi T."/>
        </authorList>
    </citation>
    <scope>NUCLEOTIDE SEQUENCE [LARGE SCALE GENOMIC DNA]</scope>
    <source>
        <strain>K12 / W3110 / ATCC 27325 / DSM 5911</strain>
    </source>
</reference>
<reference key="4">
    <citation type="journal article" date="1994" name="J. Bacteriol.">
        <title>Organization and expression of the Escherichia coli K-12 dad operon encoding the smaller subunit of D-amino acid dehydrogenase and the catabolic alanine racemase.</title>
        <authorList>
            <person name="Lobocka M."/>
            <person name="Hennig J."/>
            <person name="Wild J."/>
            <person name="Klopotowski T."/>
        </authorList>
    </citation>
    <scope>NUCLEOTIDE SEQUENCE [GENOMIC DNA] OF 1-443</scope>
    <source>
        <strain>K12</strain>
    </source>
</reference>
<proteinExistence type="predicted"/>
<evidence type="ECO:0000305" key="1"/>
<protein>
    <recommendedName>
        <fullName>Uncharacterized protein YcgB</fullName>
    </recommendedName>
</protein>
<sequence>MATIDSMNKDTTRLSDGPDWTFDLLDVYLAEIDRVAKLYRLDTYPHQIEVITSEQMMDAYSSVGMPINYPHWSFGKKFIETERLYKHGQQGLAYEIVINSNPCIAYLMEENTITMQALVMAHACYGHNSFFKNNYLFRSWTDASSIVDYLIFARKYITECEERYGVDEVERLLDSCHALMNYGVDRYKRPQKISLQEEKARQKSREEYLQSQVNMLWRTLPKREEEKTVAEARRYPSEPQENLLYFMEKNAPLLESWQREILRIVRKVSQYFYPQKQTQVMNEGWATFWHYTILNHLYDEGKVTERFMLEFLHSHTNVVFQPPYNSPWYSGINPYALGFAMFQDIKRICQSPTEEDKYWFPDIAGSDWLETLHFAMRDFKDESFISQFLSPKVMRDFRFFTVLDDDRHNYLEISAIHNEEGYREIRNRLSSQYNLSNLEPNIQIWNVDLRGDRSLTLRYIPHNRAPLDRGRKEVLKHVHRLWGFDVMLEQQNEDGSIELLERCPPRMGNL</sequence>
<feature type="chain" id="PRO_0000168851" description="Uncharacterized protein YcgB">
    <location>
        <begin position="1"/>
        <end position="510"/>
    </location>
</feature>
<keyword id="KW-1185">Reference proteome</keyword>
<name>YCGB_ECOLI</name>
<accession>P29013</accession>
<accession>P76006</accession>
<comment type="similarity">
    <text evidence="1">To B.subtilis SpoVR.</text>
</comment>